<proteinExistence type="predicted"/>
<gene>
    <name type="ORF">SPCC132.03</name>
</gene>
<dbReference type="EMBL" id="CU329672">
    <property type="protein sequence ID" value="CAB58130.1"/>
    <property type="molecule type" value="Genomic_DNA"/>
</dbReference>
<dbReference type="PIR" id="T40930">
    <property type="entry name" value="T40930"/>
</dbReference>
<dbReference type="RefSeq" id="NP_588148.1">
    <property type="nucleotide sequence ID" value="NM_001023137.2"/>
</dbReference>
<dbReference type="SMR" id="Q9USN6"/>
<dbReference type="BioGRID" id="275849">
    <property type="interactions" value="6"/>
</dbReference>
<dbReference type="iPTMnet" id="Q9USN6"/>
<dbReference type="PaxDb" id="4896-SPCC132.03.1"/>
<dbReference type="EnsemblFungi" id="SPCC132.03.1">
    <property type="protein sequence ID" value="SPCC132.03.1:pep"/>
    <property type="gene ID" value="SPCC132.03"/>
</dbReference>
<dbReference type="PomBase" id="SPCC132.03"/>
<dbReference type="VEuPathDB" id="FungiDB:SPCC132.03"/>
<dbReference type="HOGENOM" id="CLU_1526039_0_0_1"/>
<dbReference type="InParanoid" id="Q9USN6"/>
<dbReference type="PRO" id="PR:Q9USN6"/>
<dbReference type="Proteomes" id="UP000002485">
    <property type="component" value="Chromosome III"/>
</dbReference>
<dbReference type="GO" id="GO:0005739">
    <property type="term" value="C:mitochondrion"/>
    <property type="evidence" value="ECO:0007005"/>
    <property type="project" value="PomBase"/>
</dbReference>
<reference key="1">
    <citation type="journal article" date="2002" name="Nature">
        <title>The genome sequence of Schizosaccharomyces pombe.</title>
        <authorList>
            <person name="Wood V."/>
            <person name="Gwilliam R."/>
            <person name="Rajandream M.A."/>
            <person name="Lyne M.H."/>
            <person name="Lyne R."/>
            <person name="Stewart A."/>
            <person name="Sgouros J.G."/>
            <person name="Peat N."/>
            <person name="Hayles J."/>
            <person name="Baker S.G."/>
            <person name="Basham D."/>
            <person name="Bowman S."/>
            <person name="Brooks K."/>
            <person name="Brown D."/>
            <person name="Brown S."/>
            <person name="Chillingworth T."/>
            <person name="Churcher C.M."/>
            <person name="Collins M."/>
            <person name="Connor R."/>
            <person name="Cronin A."/>
            <person name="Davis P."/>
            <person name="Feltwell T."/>
            <person name="Fraser A."/>
            <person name="Gentles S."/>
            <person name="Goble A."/>
            <person name="Hamlin N."/>
            <person name="Harris D.E."/>
            <person name="Hidalgo J."/>
            <person name="Hodgson G."/>
            <person name="Holroyd S."/>
            <person name="Hornsby T."/>
            <person name="Howarth S."/>
            <person name="Huckle E.J."/>
            <person name="Hunt S."/>
            <person name="Jagels K."/>
            <person name="James K.D."/>
            <person name="Jones L."/>
            <person name="Jones M."/>
            <person name="Leather S."/>
            <person name="McDonald S."/>
            <person name="McLean J."/>
            <person name="Mooney P."/>
            <person name="Moule S."/>
            <person name="Mungall K.L."/>
            <person name="Murphy L.D."/>
            <person name="Niblett D."/>
            <person name="Odell C."/>
            <person name="Oliver K."/>
            <person name="O'Neil S."/>
            <person name="Pearson D."/>
            <person name="Quail M.A."/>
            <person name="Rabbinowitsch E."/>
            <person name="Rutherford K.M."/>
            <person name="Rutter S."/>
            <person name="Saunders D."/>
            <person name="Seeger K."/>
            <person name="Sharp S."/>
            <person name="Skelton J."/>
            <person name="Simmonds M.N."/>
            <person name="Squares R."/>
            <person name="Squares S."/>
            <person name="Stevens K."/>
            <person name="Taylor K."/>
            <person name="Taylor R.G."/>
            <person name="Tivey A."/>
            <person name="Walsh S.V."/>
            <person name="Warren T."/>
            <person name="Whitehead S."/>
            <person name="Woodward J.R."/>
            <person name="Volckaert G."/>
            <person name="Aert R."/>
            <person name="Robben J."/>
            <person name="Grymonprez B."/>
            <person name="Weltjens I."/>
            <person name="Vanstreels E."/>
            <person name="Rieger M."/>
            <person name="Schaefer M."/>
            <person name="Mueller-Auer S."/>
            <person name="Gabel C."/>
            <person name="Fuchs M."/>
            <person name="Duesterhoeft A."/>
            <person name="Fritzc C."/>
            <person name="Holzer E."/>
            <person name="Moestl D."/>
            <person name="Hilbert H."/>
            <person name="Borzym K."/>
            <person name="Langer I."/>
            <person name="Beck A."/>
            <person name="Lehrach H."/>
            <person name="Reinhardt R."/>
            <person name="Pohl T.M."/>
            <person name="Eger P."/>
            <person name="Zimmermann W."/>
            <person name="Wedler H."/>
            <person name="Wambutt R."/>
            <person name="Purnelle B."/>
            <person name="Goffeau A."/>
            <person name="Cadieu E."/>
            <person name="Dreano S."/>
            <person name="Gloux S."/>
            <person name="Lelaure V."/>
            <person name="Mottier S."/>
            <person name="Galibert F."/>
            <person name="Aves S.J."/>
            <person name="Xiang Z."/>
            <person name="Hunt C."/>
            <person name="Moore K."/>
            <person name="Hurst S.M."/>
            <person name="Lucas M."/>
            <person name="Rochet M."/>
            <person name="Gaillardin C."/>
            <person name="Tallada V.A."/>
            <person name="Garzon A."/>
            <person name="Thode G."/>
            <person name="Daga R.R."/>
            <person name="Cruzado L."/>
            <person name="Jimenez J."/>
            <person name="Sanchez M."/>
            <person name="del Rey F."/>
            <person name="Benito J."/>
            <person name="Dominguez A."/>
            <person name="Revuelta J.L."/>
            <person name="Moreno S."/>
            <person name="Armstrong J."/>
            <person name="Forsburg S.L."/>
            <person name="Cerutti L."/>
            <person name="Lowe T."/>
            <person name="McCombie W.R."/>
            <person name="Paulsen I."/>
            <person name="Potashkin J."/>
            <person name="Shpakovski G.V."/>
            <person name="Ussery D."/>
            <person name="Barrell B.G."/>
            <person name="Nurse P."/>
        </authorList>
    </citation>
    <scope>NUCLEOTIDE SEQUENCE [LARGE SCALE GENOMIC DNA]</scope>
    <source>
        <strain>972 / ATCC 24843</strain>
    </source>
</reference>
<protein>
    <recommendedName>
        <fullName>Uncharacterized protein C132.03</fullName>
    </recommendedName>
</protein>
<name>YJY3_SCHPO</name>
<accession>Q9USN6</accession>
<feature type="chain" id="PRO_0000116821" description="Uncharacterized protein C132.03">
    <location>
        <begin position="1"/>
        <end position="176"/>
    </location>
</feature>
<keyword id="KW-1185">Reference proteome</keyword>
<sequence length="176" mass="20245">MNPKRLRITGPEDLTDAYDTMPFRCLNGSMPPKTPLNFVFKENDSHVSNGVGLKKDCIESIDDLNLDDWSEQQESILLMCYENELQKPITCTPMGPICLWAPPEPVLRSVHNTLLKMGWSISEKKMKKKLLELLAKNKKRRTMRKLEIDTNLSFLTDVQRDSPIIENAPLQSPFHF</sequence>
<organism>
    <name type="scientific">Schizosaccharomyces pombe (strain 972 / ATCC 24843)</name>
    <name type="common">Fission yeast</name>
    <dbReference type="NCBI Taxonomy" id="284812"/>
    <lineage>
        <taxon>Eukaryota</taxon>
        <taxon>Fungi</taxon>
        <taxon>Dikarya</taxon>
        <taxon>Ascomycota</taxon>
        <taxon>Taphrinomycotina</taxon>
        <taxon>Schizosaccharomycetes</taxon>
        <taxon>Schizosaccharomycetales</taxon>
        <taxon>Schizosaccharomycetaceae</taxon>
        <taxon>Schizosaccharomyces</taxon>
    </lineage>
</organism>